<reference key="1">
    <citation type="journal article" date="1995" name="Eur. J. Biochem.">
        <title>Cloning, sequence analysis and expression of the cDNA encoding a sodium-dependent phosphate transporter from the bovine renal epithelial cell line NBL-1.</title>
        <authorList>
            <person name="Helps C.R."/>
            <person name="Murer H."/>
            <person name="McGiven J.D."/>
        </authorList>
    </citation>
    <scope>NUCLEOTIDE SEQUENCE [MRNA]</scope>
    <scope>FUNCTION</scope>
    <scope>TRANSPORTER ACTIVITY</scope>
    <source>
        <tissue>Kidney epithelium</tissue>
    </source>
</reference>
<reference key="2">
    <citation type="journal article" date="1991" name="Eur. J. Biochem.">
        <title>Adaptive regulation of Na(+)-dependent phosphate transport in the bovine renal epithelial cell line NBL-1. Identification of the phosphate transporter as a 55-kDa glycoprotein.</title>
        <authorList>
            <person name="Helps C.R."/>
            <person name="McGivan J."/>
        </authorList>
    </citation>
    <scope>FUNCTION</scope>
    <scope>TRANSPORTER ACTIVITY</scope>
    <scope>BIOPHYSICOCHEMICAL PROPERTIES</scope>
    <scope>GLYCOSYLATION</scope>
    <source>
        <tissue>Kidney epithelium</tissue>
    </source>
</reference>
<evidence type="ECO:0000250" key="1">
    <source>
        <dbReference type="UniProtKB" id="Q06496"/>
    </source>
</evidence>
<evidence type="ECO:0000250" key="2">
    <source>
        <dbReference type="UniProtKB" id="Q9DBP0"/>
    </source>
</evidence>
<evidence type="ECO:0000255" key="3"/>
<evidence type="ECO:0000256" key="4">
    <source>
        <dbReference type="SAM" id="MobiDB-lite"/>
    </source>
</evidence>
<evidence type="ECO:0000269" key="5">
    <source>
    </source>
</evidence>
<evidence type="ECO:0000269" key="6">
    <source>
    </source>
</evidence>
<evidence type="ECO:0000305" key="7"/>
<evidence type="ECO:0000305" key="8">
    <source>
    </source>
</evidence>
<feature type="chain" id="PRO_0000068612" description="Sodium-dependent phosphate transport protein 2B">
    <location>
        <begin position="1"/>
        <end position="693"/>
    </location>
</feature>
<feature type="topological domain" description="Cytoplasmic" evidence="3">
    <location>
        <begin position="1"/>
        <end position="89"/>
    </location>
</feature>
<feature type="transmembrane region" description="Helical; Name=M1" evidence="3">
    <location>
        <begin position="90"/>
        <end position="110"/>
    </location>
</feature>
<feature type="topological domain" description="Extracellular" evidence="3">
    <location>
        <begin position="111"/>
        <end position="135"/>
    </location>
</feature>
<feature type="transmembrane region" description="Helical; Name=M2" evidence="3">
    <location>
        <begin position="136"/>
        <end position="156"/>
    </location>
</feature>
<feature type="topological domain" description="Cytoplasmic" evidence="3">
    <location>
        <begin position="157"/>
        <end position="212"/>
    </location>
</feature>
<feature type="transmembrane region" description="Helical; Name=M3" evidence="3">
    <location>
        <begin position="213"/>
        <end position="233"/>
    </location>
</feature>
<feature type="topological domain" description="Extracellular" evidence="3">
    <location>
        <begin position="234"/>
        <end position="361"/>
    </location>
</feature>
<feature type="transmembrane region" description="Helical; Name=M4" evidence="3">
    <location>
        <begin position="362"/>
        <end position="382"/>
    </location>
</feature>
<feature type="topological domain" description="Cytoplasmic" evidence="3">
    <location>
        <begin position="383"/>
        <end position="408"/>
    </location>
</feature>
<feature type="transmembrane region" description="Helical; Name=M5" evidence="3">
    <location>
        <begin position="409"/>
        <end position="429"/>
    </location>
</feature>
<feature type="topological domain" description="Extracellular" evidence="3">
    <location>
        <begin position="430"/>
        <end position="485"/>
    </location>
</feature>
<feature type="transmembrane region" description="Helical; Name=M6" evidence="3">
    <location>
        <begin position="486"/>
        <end position="506"/>
    </location>
</feature>
<feature type="topological domain" description="Cytoplasmic" evidence="3">
    <location>
        <begin position="507"/>
        <end position="525"/>
    </location>
</feature>
<feature type="transmembrane region" description="Helical; Name=M7" evidence="3">
    <location>
        <begin position="526"/>
        <end position="546"/>
    </location>
</feature>
<feature type="topological domain" description="Extracellular" evidence="3">
    <location>
        <begin position="547"/>
        <end position="550"/>
    </location>
</feature>
<feature type="transmembrane region" description="Helical; Name=M8" evidence="3">
    <location>
        <begin position="551"/>
        <end position="571"/>
    </location>
</feature>
<feature type="topological domain" description="Cytoplasmic" evidence="3">
    <location>
        <begin position="572"/>
        <end position="693"/>
    </location>
</feature>
<feature type="region of interest" description="Disordered" evidence="4">
    <location>
        <begin position="1"/>
        <end position="46"/>
    </location>
</feature>
<feature type="compositionally biased region" description="Basic and acidic residues" evidence="4">
    <location>
        <begin position="17"/>
        <end position="40"/>
    </location>
</feature>
<feature type="glycosylation site" description="N-linked (GlcNAc...) asparagine" evidence="3">
    <location>
        <position position="307"/>
    </location>
</feature>
<feature type="glycosylation site" description="N-linked (GlcNAc...) asparagine" evidence="3">
    <location>
        <position position="320"/>
    </location>
</feature>
<feature type="disulfide bond" evidence="1">
    <location>
        <begin position="302"/>
        <end position="349"/>
    </location>
</feature>
<organism>
    <name type="scientific">Bos taurus</name>
    <name type="common">Bovine</name>
    <dbReference type="NCBI Taxonomy" id="9913"/>
    <lineage>
        <taxon>Eukaryota</taxon>
        <taxon>Metazoa</taxon>
        <taxon>Chordata</taxon>
        <taxon>Craniata</taxon>
        <taxon>Vertebrata</taxon>
        <taxon>Euteleostomi</taxon>
        <taxon>Mammalia</taxon>
        <taxon>Eutheria</taxon>
        <taxon>Laurasiatheria</taxon>
        <taxon>Artiodactyla</taxon>
        <taxon>Ruminantia</taxon>
        <taxon>Pecora</taxon>
        <taxon>Bovidae</taxon>
        <taxon>Bovinae</taxon>
        <taxon>Bos</taxon>
    </lineage>
</organism>
<protein>
    <recommendedName>
        <fullName>Sodium-dependent phosphate transport protein 2B</fullName>
        <shortName>Sodium-phosphate transport protein 2B</shortName>
    </recommendedName>
    <alternativeName>
        <fullName>Na(+)-dependent phosphate cotransporter 2B</fullName>
    </alternativeName>
    <alternativeName>
        <fullName>Sodium/phosphate cotransporter 2B</fullName>
        <shortName>Na(+)/Pi cotransporter 2B</shortName>
        <shortName>NaPi-2b</shortName>
    </alternativeName>
    <alternativeName>
        <fullName>Solute carrier family 34 member 2</fullName>
    </alternativeName>
</protein>
<proteinExistence type="evidence at protein level"/>
<sequence>MAPWPELENSQPTSEKYTVKADGEQSAKPEKAKETEKDDTGTPITKIELVPSHSTATLIEEPTEVEDPWDLPELKDTGLKWSERDTKGKILCVFQGIGKFILLLVFLYFFVCSLDVLSSAFQLVGGKVAGKFFNNNSIMSNPLAGMVIGVLVTVLVQSSSTSTSIVVSMVASSLLPVHAAIPIIMGANIGTSITNTIVALMQAGDRKEFRRAFAGATVHDFFNWLSVLVLLPLEAATGYLERLTNLVVESFHFKNGEEAPELLKVITDPFTKLIIQLDKSILNQIAMNDESVQNKSMIKIWCKTFTNVTERNVTVPSPENCTSPSLCWTDGLYTWTIKNVTYKENIAKCQHIFVNFNLSDAIVGTILLITSLLILCTCLILIVKLLGSVLRGQVAAVIKKTINTDFPYPFSWVTGYLAILVGAGMTFIVQSSSVFTSAMTPLIGIGVISIQRAYPLTLGANIGTTTTAILAALASPGSTLKSSLQIALCHFFFNISGIILWYPIPFTRLPIRLAKGLGNISSKYRWFAIVYLIVFFLLIPLAVFGLSLIGWPVLVGVASPIVLVILLVVVLKILQSFCPGSLPQKLRSWDFLPFWMRSLEPWDKLITSLTSCFQMRCCCCCRVCCRLCCGLCGCSKCCRCTKCSEDLEEGKDEPVKSPEAFNNLAMDKEAQDGVTKSEVDASGTKIVSSVTAL</sequence>
<accession>Q27960</accession>
<keyword id="KW-1003">Cell membrane</keyword>
<keyword id="KW-1015">Disulfide bond</keyword>
<keyword id="KW-0325">Glycoprotein</keyword>
<keyword id="KW-0406">Ion transport</keyword>
<keyword id="KW-0472">Membrane</keyword>
<keyword id="KW-1185">Reference proteome</keyword>
<keyword id="KW-0915">Sodium</keyword>
<keyword id="KW-0739">Sodium transport</keyword>
<keyword id="KW-0769">Symport</keyword>
<keyword id="KW-0812">Transmembrane</keyword>
<keyword id="KW-1133">Transmembrane helix</keyword>
<keyword id="KW-0813">Transport</keyword>
<name>NPT2B_BOVIN</name>
<dbReference type="EMBL" id="X81699">
    <property type="protein sequence ID" value="CAA57345.1"/>
    <property type="molecule type" value="mRNA"/>
</dbReference>
<dbReference type="PIR" id="S68972">
    <property type="entry name" value="S49228"/>
</dbReference>
<dbReference type="RefSeq" id="NP_777086.1">
    <property type="nucleotide sequence ID" value="NM_174661.2"/>
</dbReference>
<dbReference type="FunCoup" id="Q27960">
    <property type="interactions" value="53"/>
</dbReference>
<dbReference type="STRING" id="9913.ENSBTAP00000069565"/>
<dbReference type="GlyCosmos" id="Q27960">
    <property type="glycosylation" value="2 sites, No reported glycans"/>
</dbReference>
<dbReference type="GlyGen" id="Q27960">
    <property type="glycosylation" value="2 sites"/>
</dbReference>
<dbReference type="PaxDb" id="9913-ENSBTAP00000002023"/>
<dbReference type="PeptideAtlas" id="Q27960"/>
<dbReference type="GeneID" id="282484"/>
<dbReference type="KEGG" id="bta:282484"/>
<dbReference type="CTD" id="10568"/>
<dbReference type="eggNOG" id="ENOG502QQ3I">
    <property type="taxonomic scope" value="Eukaryota"/>
</dbReference>
<dbReference type="InParanoid" id="Q27960"/>
<dbReference type="OrthoDB" id="76259at2759"/>
<dbReference type="Proteomes" id="UP000009136">
    <property type="component" value="Unplaced"/>
</dbReference>
<dbReference type="GO" id="GO:0016324">
    <property type="term" value="C:apical plasma membrane"/>
    <property type="evidence" value="ECO:0000318"/>
    <property type="project" value="GO_Central"/>
</dbReference>
<dbReference type="GO" id="GO:0005903">
    <property type="term" value="C:brush border"/>
    <property type="evidence" value="ECO:0000318"/>
    <property type="project" value="GO_Central"/>
</dbReference>
<dbReference type="GO" id="GO:0016020">
    <property type="term" value="C:membrane"/>
    <property type="evidence" value="ECO:0000250"/>
    <property type="project" value="UniProtKB"/>
</dbReference>
<dbReference type="GO" id="GO:0031982">
    <property type="term" value="C:vesicle"/>
    <property type="evidence" value="ECO:0000318"/>
    <property type="project" value="GO_Central"/>
</dbReference>
<dbReference type="GO" id="GO:0042301">
    <property type="term" value="F:phosphate ion binding"/>
    <property type="evidence" value="ECO:0000250"/>
    <property type="project" value="UniProtKB"/>
</dbReference>
<dbReference type="GO" id="GO:0031402">
    <property type="term" value="F:sodium ion binding"/>
    <property type="evidence" value="ECO:0000250"/>
    <property type="project" value="UniProtKB"/>
</dbReference>
<dbReference type="GO" id="GO:0005436">
    <property type="term" value="F:sodium:phosphate symporter activity"/>
    <property type="evidence" value="ECO:0000314"/>
    <property type="project" value="UniProtKB"/>
</dbReference>
<dbReference type="GO" id="GO:0030643">
    <property type="term" value="P:intracellular phosphate ion homeostasis"/>
    <property type="evidence" value="ECO:0000318"/>
    <property type="project" value="GO_Central"/>
</dbReference>
<dbReference type="GO" id="GO:0006817">
    <property type="term" value="P:phosphate ion transport"/>
    <property type="evidence" value="ECO:0000250"/>
    <property type="project" value="UniProtKB"/>
</dbReference>
<dbReference type="GO" id="GO:0044341">
    <property type="term" value="P:sodium-dependent phosphate transport"/>
    <property type="evidence" value="ECO:0000318"/>
    <property type="project" value="GO_Central"/>
</dbReference>
<dbReference type="InterPro" id="IPR003841">
    <property type="entry name" value="Na/Pi_transpt"/>
</dbReference>
<dbReference type="NCBIfam" id="TIGR01013">
    <property type="entry name" value="2a58"/>
    <property type="match status" value="1"/>
</dbReference>
<dbReference type="NCBIfam" id="NF037997">
    <property type="entry name" value="Na_Pi_symport"/>
    <property type="match status" value="1"/>
</dbReference>
<dbReference type="PANTHER" id="PTHR10010:SF23">
    <property type="entry name" value="SODIUM-DEPENDENT PHOSPHATE TRANSPORT PROTEIN 2B"/>
    <property type="match status" value="1"/>
</dbReference>
<dbReference type="PANTHER" id="PTHR10010">
    <property type="entry name" value="SOLUTE CARRIER FAMILY 34 SODIUM PHOSPHATE , MEMBER 2-RELATED"/>
    <property type="match status" value="1"/>
</dbReference>
<dbReference type="Pfam" id="PF02690">
    <property type="entry name" value="Na_Pi_cotrans"/>
    <property type="match status" value="2"/>
</dbReference>
<gene>
    <name type="primary">SLC34A2</name>
</gene>
<comment type="function">
    <text evidence="5 6">Involved in actively transporting phosphate into cells via Na(+) cotransport.</text>
</comment>
<comment type="catalytic activity">
    <reaction evidence="5 6">
        <text>3 Na(+)(out) + phosphate(out) = 3 Na(+)(in) + phosphate(in)</text>
        <dbReference type="Rhea" id="RHEA:71255"/>
        <dbReference type="ChEBI" id="CHEBI:29101"/>
        <dbReference type="ChEBI" id="CHEBI:43474"/>
    </reaction>
    <physiologicalReaction direction="left-to-right" evidence="8">
        <dbReference type="Rhea" id="RHEA:71256"/>
    </physiologicalReaction>
</comment>
<comment type="biophysicochemical properties">
    <kinetics>
        <KM evidence="5">17.1 uM for phosphate (in the presence of &lt;50 uM inorganic phosphate)</KM>
        <KM evidence="5">36.3 uM for phosphate (in the presence of 10 mM inorganic phosphate)</KM>
        <Vmax evidence="5">2.11 nmol/min/mg enzyme for phosphate (in the presence of &lt;50 uM inorganic phosphate)</Vmax>
        <Vmax evidence="5">0.98 nmol/min/mg enzyme for phosphate (in the presence of 10 mM inorganic phosphate)</Vmax>
    </kinetics>
</comment>
<comment type="subcellular location">
    <subcellularLocation>
        <location evidence="2">Apical cell membrane</location>
        <topology evidence="3">Multi-pass membrane protein</topology>
    </subcellularLocation>
    <text evidence="2">Localized at the brush border membranes of enterocytes.</text>
</comment>
<comment type="PTM">
    <text evidence="5">Glycosylated.</text>
</comment>
<comment type="similarity">
    <text evidence="7">Belongs to the SLC34A transporter family.</text>
</comment>